<comment type="function">
    <text evidence="1">Part of the ABC transporter complex LsrABCD involved in autoinducer 2 (AI-2) import. Binds AI-2 and delivers it to the LsrC and LsrD permeases (By similarity).</text>
</comment>
<comment type="subunit">
    <text evidence="1">The complex is composed of two ATP-binding proteins (LsrA), two transmembrane proteins (LsrC and LsrD) and a solute-binding protein (LsrB).</text>
</comment>
<comment type="subcellular location">
    <subcellularLocation>
        <location evidence="3">Periplasm</location>
    </subcellularLocation>
</comment>
<comment type="similarity">
    <text evidence="3">Belongs to the bacterial solute-binding protein 2 family.</text>
</comment>
<evidence type="ECO:0000250" key="1"/>
<evidence type="ECO:0000255" key="2"/>
<evidence type="ECO:0000305" key="3"/>
<accession>A9R0S5</accession>
<keyword id="KW-0574">Periplasm</keyword>
<keyword id="KW-0732">Signal</keyword>
<name>LSRB_YERPG</name>
<reference key="1">
    <citation type="journal article" date="2010" name="J. Bacteriol.">
        <title>Genome sequence of the deep-rooted Yersinia pestis strain Angola reveals new insights into the evolution and pangenome of the plague bacterium.</title>
        <authorList>
            <person name="Eppinger M."/>
            <person name="Worsham P.L."/>
            <person name="Nikolich M.P."/>
            <person name="Riley D.R."/>
            <person name="Sebastian Y."/>
            <person name="Mou S."/>
            <person name="Achtman M."/>
            <person name="Lindler L.E."/>
            <person name="Ravel J."/>
        </authorList>
    </citation>
    <scope>NUCLEOTIDE SEQUENCE [LARGE SCALE GENOMIC DNA]</scope>
    <source>
        <strain>Angola</strain>
    </source>
</reference>
<organism>
    <name type="scientific">Yersinia pestis bv. Antiqua (strain Angola)</name>
    <dbReference type="NCBI Taxonomy" id="349746"/>
    <lineage>
        <taxon>Bacteria</taxon>
        <taxon>Pseudomonadati</taxon>
        <taxon>Pseudomonadota</taxon>
        <taxon>Gammaproteobacteria</taxon>
        <taxon>Enterobacterales</taxon>
        <taxon>Yersiniaceae</taxon>
        <taxon>Yersinia</taxon>
    </lineage>
</organism>
<dbReference type="EMBL" id="CP000901">
    <property type="protein sequence ID" value="ABX88528.1"/>
    <property type="molecule type" value="Genomic_DNA"/>
</dbReference>
<dbReference type="RefSeq" id="WP_002209189.1">
    <property type="nucleotide sequence ID" value="NZ_CP009935.1"/>
</dbReference>
<dbReference type="SMR" id="A9R0S5"/>
<dbReference type="GeneID" id="57974201"/>
<dbReference type="KEGG" id="ypg:YpAngola_A0861"/>
<dbReference type="PATRIC" id="fig|349746.12.peg.1812"/>
<dbReference type="GO" id="GO:0043190">
    <property type="term" value="C:ATP-binding cassette (ABC) transporter complex"/>
    <property type="evidence" value="ECO:0007669"/>
    <property type="project" value="InterPro"/>
</dbReference>
<dbReference type="GO" id="GO:0030288">
    <property type="term" value="C:outer membrane-bounded periplasmic space"/>
    <property type="evidence" value="ECO:0007669"/>
    <property type="project" value="TreeGrafter"/>
</dbReference>
<dbReference type="GO" id="GO:0030246">
    <property type="term" value="F:carbohydrate binding"/>
    <property type="evidence" value="ECO:0007669"/>
    <property type="project" value="TreeGrafter"/>
</dbReference>
<dbReference type="CDD" id="cd20003">
    <property type="entry name" value="PBP1_LsrB_Quorum_Sensing"/>
    <property type="match status" value="1"/>
</dbReference>
<dbReference type="Gene3D" id="3.40.50.2300">
    <property type="match status" value="2"/>
</dbReference>
<dbReference type="InterPro" id="IPR050555">
    <property type="entry name" value="Bact_Solute-Bind_Prot2"/>
</dbReference>
<dbReference type="InterPro" id="IPR030159">
    <property type="entry name" value="LsrB"/>
</dbReference>
<dbReference type="InterPro" id="IPR028082">
    <property type="entry name" value="Peripla_BP_I"/>
</dbReference>
<dbReference type="InterPro" id="IPR025997">
    <property type="entry name" value="SBP_2_dom"/>
</dbReference>
<dbReference type="NCBIfam" id="NF011937">
    <property type="entry name" value="PRK15408.1"/>
    <property type="match status" value="1"/>
</dbReference>
<dbReference type="PANTHER" id="PTHR30036:SF7">
    <property type="entry name" value="ABC TRANSPORTER PERIPLASMIC-BINDING PROTEIN YPHF"/>
    <property type="match status" value="1"/>
</dbReference>
<dbReference type="PANTHER" id="PTHR30036">
    <property type="entry name" value="D-XYLOSE-BINDING PERIPLASMIC PROTEIN"/>
    <property type="match status" value="1"/>
</dbReference>
<dbReference type="Pfam" id="PF13407">
    <property type="entry name" value="Peripla_BP_4"/>
    <property type="match status" value="1"/>
</dbReference>
<dbReference type="SUPFAM" id="SSF53822">
    <property type="entry name" value="Periplasmic binding protein-like I"/>
    <property type="match status" value="1"/>
</dbReference>
<proteinExistence type="inferred from homology"/>
<protein>
    <recommendedName>
        <fullName>Autoinducer 2-binding protein LsrB</fullName>
        <shortName>AI-2-binding protein LsrB</shortName>
    </recommendedName>
</protein>
<sequence>MRTQRLKKLALVCALGFACITTAQAAERIAFIPKLVGVGFFTSGGKGAVDAGKALGVDVTYDGPTEPSVSGQVQLINNFVNQGYNAIVVSAVSPDGLCPALKRAMQRGVKILTWDSDTKPECRSVYINQGTPNQLGSMLVDMAANQVKKEQAKVAFFYSSPTVTDQNQWVNEAKKKIQQEHPGWEIVTTQFGYNDATKSLQTAEGILKAYADLDAIIAPDANALPAAAQAAENLKRANVAIVGFSTPNVMRPYVERGTVKEFGLWDVVNQGKISVYVANEMLKKGDLNVGDKIDIPNIGVVEVSPNRVQGYDYEAKGNGIVLLPQRVIFTKENISKYDF</sequence>
<gene>
    <name type="primary">lsrB</name>
    <name type="ordered locus">YpAngola_A0861</name>
</gene>
<feature type="signal peptide" evidence="2">
    <location>
        <begin position="1"/>
        <end position="25"/>
    </location>
</feature>
<feature type="chain" id="PRO_0000351334" description="Autoinducer 2-binding protein LsrB">
    <location>
        <begin position="26"/>
        <end position="339"/>
    </location>
</feature>